<comment type="function">
    <text evidence="2">Transaldolase is important for the balance of metabolites in the pentose-phosphate pathway.</text>
</comment>
<comment type="catalytic activity">
    <reaction evidence="2">
        <text>D-sedoheptulose 7-phosphate + D-glyceraldehyde 3-phosphate = D-erythrose 4-phosphate + beta-D-fructose 6-phosphate</text>
        <dbReference type="Rhea" id="RHEA:17053"/>
        <dbReference type="ChEBI" id="CHEBI:16897"/>
        <dbReference type="ChEBI" id="CHEBI:57483"/>
        <dbReference type="ChEBI" id="CHEBI:57634"/>
        <dbReference type="ChEBI" id="CHEBI:59776"/>
        <dbReference type="EC" id="2.2.1.2"/>
    </reaction>
</comment>
<comment type="pathway">
    <text evidence="2">Carbohydrate degradation; pentose phosphate pathway; D-glyceraldehyde 3-phosphate and beta-D-fructose 6-phosphate from D-ribose 5-phosphate and D-xylulose 5-phosphate (non-oxidative stage): step 2/3.</text>
</comment>
<comment type="subunit">
    <text evidence="1">Homodimer.</text>
</comment>
<comment type="subcellular location">
    <subcellularLocation>
        <location evidence="2">Cytoplasm</location>
    </subcellularLocation>
</comment>
<comment type="similarity">
    <text evidence="2">Belongs to the transaldolase family. Type 1 subfamily.</text>
</comment>
<feature type="chain" id="PRO_0000230981" description="Transaldolase">
    <location>
        <begin position="1"/>
        <end position="317"/>
    </location>
</feature>
<feature type="active site" description="Schiff-base intermediate with substrate" evidence="2">
    <location>
        <position position="132"/>
    </location>
</feature>
<gene>
    <name evidence="2" type="primary">tal</name>
    <name type="ordered locus">YPTB0606</name>
</gene>
<organism>
    <name type="scientific">Yersinia pseudotuberculosis serotype I (strain IP32953)</name>
    <dbReference type="NCBI Taxonomy" id="273123"/>
    <lineage>
        <taxon>Bacteria</taxon>
        <taxon>Pseudomonadati</taxon>
        <taxon>Pseudomonadota</taxon>
        <taxon>Gammaproteobacteria</taxon>
        <taxon>Enterobacterales</taxon>
        <taxon>Yersiniaceae</taxon>
        <taxon>Yersinia</taxon>
    </lineage>
</organism>
<accession>Q66ET5</accession>
<proteinExistence type="inferred from homology"/>
<reference key="1">
    <citation type="journal article" date="2004" name="Proc. Natl. Acad. Sci. U.S.A.">
        <title>Insights into the evolution of Yersinia pestis through whole-genome comparison with Yersinia pseudotuberculosis.</title>
        <authorList>
            <person name="Chain P.S.G."/>
            <person name="Carniel E."/>
            <person name="Larimer F.W."/>
            <person name="Lamerdin J."/>
            <person name="Stoutland P.O."/>
            <person name="Regala W.M."/>
            <person name="Georgescu A.M."/>
            <person name="Vergez L.M."/>
            <person name="Land M.L."/>
            <person name="Motin V.L."/>
            <person name="Brubaker R.R."/>
            <person name="Fowler J."/>
            <person name="Hinnebusch J."/>
            <person name="Marceau M."/>
            <person name="Medigue C."/>
            <person name="Simonet M."/>
            <person name="Chenal-Francisque V."/>
            <person name="Souza B."/>
            <person name="Dacheux D."/>
            <person name="Elliott J.M."/>
            <person name="Derbise A."/>
            <person name="Hauser L.J."/>
            <person name="Garcia E."/>
        </authorList>
    </citation>
    <scope>NUCLEOTIDE SEQUENCE [LARGE SCALE GENOMIC DNA]</scope>
    <source>
        <strain>IP32953</strain>
    </source>
</reference>
<sequence length="317" mass="35093">MTDKLTSLRQITTVVADTGDIAAMKLYQPQDATTNPSIILNAAQIPEYRKLIDEAIAWAREQSSDHAQQIIDATDKLAVNIGLEILKLIPGRISTEVDARLSYDTVASVTKAKRLIKLYNEAGISNDRILIKLASTWQGIRAAEQLEKEGINCNLTLLFSFAQARACAEAGVFLISPFVGRILDWYKANGDQKEFAPSEDPGVVSVTEIYQYYKKHGYKTVVMGASFRNLGEIIELAGCDRLTIAPSLLKELAESEGPVERKLAYTGEIQAKPAPLTEAEFYWQHNQDPMAVDKLADGIRKFAIDQGKLEKMISDLL</sequence>
<keyword id="KW-0963">Cytoplasm</keyword>
<keyword id="KW-0570">Pentose shunt</keyword>
<keyword id="KW-0704">Schiff base</keyword>
<keyword id="KW-0808">Transferase</keyword>
<protein>
    <recommendedName>
        <fullName evidence="2">Transaldolase</fullName>
        <ecNumber evidence="2">2.2.1.2</ecNumber>
    </recommendedName>
</protein>
<dbReference type="EC" id="2.2.1.2" evidence="2"/>
<dbReference type="EMBL" id="BX936398">
    <property type="protein sequence ID" value="CAH19846.1"/>
    <property type="molecule type" value="Genomic_DNA"/>
</dbReference>
<dbReference type="RefSeq" id="WP_011191696.1">
    <property type="nucleotide sequence ID" value="NC_006155.1"/>
</dbReference>
<dbReference type="SMR" id="Q66ET5"/>
<dbReference type="KEGG" id="ypo:BZ17_1950"/>
<dbReference type="KEGG" id="yps:YPTB0606"/>
<dbReference type="PATRIC" id="fig|273123.14.peg.2075"/>
<dbReference type="UniPathway" id="UPA00115">
    <property type="reaction ID" value="UER00414"/>
</dbReference>
<dbReference type="Proteomes" id="UP000001011">
    <property type="component" value="Chromosome"/>
</dbReference>
<dbReference type="GO" id="GO:0005829">
    <property type="term" value="C:cytosol"/>
    <property type="evidence" value="ECO:0007669"/>
    <property type="project" value="TreeGrafter"/>
</dbReference>
<dbReference type="GO" id="GO:0004801">
    <property type="term" value="F:transaldolase activity"/>
    <property type="evidence" value="ECO:0000250"/>
    <property type="project" value="UniProtKB"/>
</dbReference>
<dbReference type="GO" id="GO:0005975">
    <property type="term" value="P:carbohydrate metabolic process"/>
    <property type="evidence" value="ECO:0007669"/>
    <property type="project" value="InterPro"/>
</dbReference>
<dbReference type="GO" id="GO:0006098">
    <property type="term" value="P:pentose-phosphate shunt"/>
    <property type="evidence" value="ECO:0007669"/>
    <property type="project" value="UniProtKB-UniRule"/>
</dbReference>
<dbReference type="CDD" id="cd00957">
    <property type="entry name" value="Transaldolase_TalAB"/>
    <property type="match status" value="1"/>
</dbReference>
<dbReference type="FunFam" id="3.20.20.70:FF:000002">
    <property type="entry name" value="Transaldolase"/>
    <property type="match status" value="1"/>
</dbReference>
<dbReference type="Gene3D" id="3.20.20.70">
    <property type="entry name" value="Aldolase class I"/>
    <property type="match status" value="1"/>
</dbReference>
<dbReference type="HAMAP" id="MF_00492">
    <property type="entry name" value="Transaldolase_1"/>
    <property type="match status" value="1"/>
</dbReference>
<dbReference type="InterPro" id="IPR013785">
    <property type="entry name" value="Aldolase_TIM"/>
</dbReference>
<dbReference type="InterPro" id="IPR001585">
    <property type="entry name" value="TAL/FSA"/>
</dbReference>
<dbReference type="InterPro" id="IPR004730">
    <property type="entry name" value="Transaldolase_1"/>
</dbReference>
<dbReference type="InterPro" id="IPR018225">
    <property type="entry name" value="Transaldolase_AS"/>
</dbReference>
<dbReference type="NCBIfam" id="NF009001">
    <property type="entry name" value="PRK12346.1"/>
    <property type="match status" value="1"/>
</dbReference>
<dbReference type="NCBIfam" id="TIGR00874">
    <property type="entry name" value="talAB"/>
    <property type="match status" value="1"/>
</dbReference>
<dbReference type="PANTHER" id="PTHR10683">
    <property type="entry name" value="TRANSALDOLASE"/>
    <property type="match status" value="1"/>
</dbReference>
<dbReference type="PANTHER" id="PTHR10683:SF18">
    <property type="entry name" value="TRANSALDOLASE"/>
    <property type="match status" value="1"/>
</dbReference>
<dbReference type="Pfam" id="PF00923">
    <property type="entry name" value="TAL_FSA"/>
    <property type="match status" value="1"/>
</dbReference>
<dbReference type="SUPFAM" id="SSF51569">
    <property type="entry name" value="Aldolase"/>
    <property type="match status" value="1"/>
</dbReference>
<dbReference type="PROSITE" id="PS01054">
    <property type="entry name" value="TRANSALDOLASE_1"/>
    <property type="match status" value="1"/>
</dbReference>
<dbReference type="PROSITE" id="PS00958">
    <property type="entry name" value="TRANSALDOLASE_2"/>
    <property type="match status" value="1"/>
</dbReference>
<evidence type="ECO:0000250" key="1"/>
<evidence type="ECO:0000255" key="2">
    <source>
        <dbReference type="HAMAP-Rule" id="MF_00492"/>
    </source>
</evidence>
<name>TAL_YERPS</name>